<comment type="function">
    <text>Sequence-specific transcription factor which is part of a developmental regulatory system that provides cells with specific positional identities on the anterior-posterior axis.</text>
</comment>
<comment type="subcellular location">
    <subcellularLocation>
        <location>Nucleus</location>
    </subcellularLocation>
</comment>
<comment type="disease" evidence="3">
    <disease id="DI-01978">
        <name>Microtia, hearing impairment, and cleft palate</name>
        <acronym>MHICP</acronym>
        <description>A disease characterized by microtia, mixed symmetric severe to profound hearing impairment, and partial cleft palate. Microtia is a congenital deformity of the outer ear that is small and abnormally shaped. In classic microtia, the pinna is essentially absent, except for a vertical sausage-shaped skin remnant. The superior aspect of this sausage-shaped skin remnant consists of underlying unorganized cartilage, and the inferior aspect of this remnant consists of a relatively well-formed lobule. Syndromic forms of microtia occur in conjunction with other abnormalities including cleft palate, a congenital fissure of the soft and/or hard palate due to faulty fusion.</description>
        <dbReference type="MIM" id="612290"/>
    </disease>
    <text>The disease is caused by variants affecting the gene represented in this entry.</text>
</comment>
<comment type="disease" evidence="4">
    <disease id="DI-03965">
        <name>Microtia with or without hearing impairment</name>
        <acronym>MCRT</acronym>
        <description>Microtia is a congenital deformity of the outer ear that is small and abnormally shaped. In classic microtia, the pinna is essentially absent, except for a vertical sausage-shaped skin remnant. The superior aspect of this sausage-shaped skin remnant consists of underlying unorganized cartilage, and the inferior aspect of this remnant consists of a relatively well-formed lobule.</description>
        <dbReference type="MIM" id="612290"/>
    </disease>
    <text>The disease is caused by variants affecting the gene represented in this entry.</text>
</comment>
<comment type="similarity">
    <text evidence="5">Belongs to the Antp homeobox family. Proboscipedia subfamily.</text>
</comment>
<gene>
    <name type="primary">HOXA2</name>
    <name type="synonym">HOX1K</name>
</gene>
<proteinExistence type="evidence at protein level"/>
<organism>
    <name type="scientific">Homo sapiens</name>
    <name type="common">Human</name>
    <dbReference type="NCBI Taxonomy" id="9606"/>
    <lineage>
        <taxon>Eukaryota</taxon>
        <taxon>Metazoa</taxon>
        <taxon>Chordata</taxon>
        <taxon>Craniata</taxon>
        <taxon>Vertebrata</taxon>
        <taxon>Euteleostomi</taxon>
        <taxon>Mammalia</taxon>
        <taxon>Eutheria</taxon>
        <taxon>Euarchontoglires</taxon>
        <taxon>Primates</taxon>
        <taxon>Haplorrhini</taxon>
        <taxon>Catarrhini</taxon>
        <taxon>Hominidae</taxon>
        <taxon>Homo</taxon>
    </lineage>
</organism>
<name>HXA2_HUMAN</name>
<feature type="chain" id="PRO_0000200036" description="Homeobox protein Hox-A2">
    <location>
        <begin position="1"/>
        <end position="376"/>
    </location>
</feature>
<feature type="DNA-binding region" description="Homeobox" evidence="1">
    <location>
        <begin position="143"/>
        <end position="202"/>
    </location>
</feature>
<feature type="region of interest" description="Disordered" evidence="2">
    <location>
        <begin position="42"/>
        <end position="93"/>
    </location>
</feature>
<feature type="region of interest" description="Disordered" evidence="2">
    <location>
        <begin position="198"/>
        <end position="229"/>
    </location>
</feature>
<feature type="region of interest" description="Disordered" evidence="2">
    <location>
        <begin position="257"/>
        <end position="279"/>
    </location>
</feature>
<feature type="short sequence motif" description="Antp-type hexapeptide">
    <location>
        <begin position="94"/>
        <end position="99"/>
    </location>
</feature>
<feature type="sequence variant" id="VAR_048023" description="In MHICP; dbSNP:rs119489104." evidence="3">
    <original>Q</original>
    <variation>K</variation>
    <location>
        <position position="186"/>
    </location>
</feature>
<evidence type="ECO:0000255" key="1">
    <source>
        <dbReference type="PROSITE-ProRule" id="PRU00108"/>
    </source>
</evidence>
<evidence type="ECO:0000256" key="2">
    <source>
        <dbReference type="SAM" id="MobiDB-lite"/>
    </source>
</evidence>
<evidence type="ECO:0000269" key="3">
    <source>
    </source>
</evidence>
<evidence type="ECO:0000269" key="4">
    <source>
    </source>
</evidence>
<evidence type="ECO:0000305" key="5"/>
<keyword id="KW-0217">Developmental protein</keyword>
<keyword id="KW-0225">Disease variant</keyword>
<keyword id="KW-0238">DNA-binding</keyword>
<keyword id="KW-0371">Homeobox</keyword>
<keyword id="KW-0539">Nucleus</keyword>
<keyword id="KW-1185">Reference proteome</keyword>
<keyword id="KW-0804">Transcription</keyword>
<keyword id="KW-0805">Transcription regulation</keyword>
<sequence length="376" mass="41002">MNYEFEREIGFINSQPSLAECLTSFPPVADTFQSSSIKTSTLSHSTLIPPPFEQTIPSLNPGSHPRHGAGGRPKPSPAGSRGSPVPAGALQPPEYPWMKEKKAAKKTALLPAAAAAATAAATGPACLSHKESLEIADGSGGGSRRLRTAYTNTQLLELEKEFHFNKYLCRPRRVEIAALLDLTERQVKVWFQNRRMKHKRQTQCKENQNSEGKCKSLEDSEKVEEDEEEKTLFEQALSVSGALLEREGYTFQQNALSQQQAPNGHNGDSQSFPVSPLTSNEKNLKHFQHQSPTVPNCLSTMGQNCGAGLNNDSPEALEVPSLQDFSVFSTDSCLQLSDAVSPSLPGSLDSPVDISADSLDFFTDTLTTIDLQHLNY</sequence>
<protein>
    <recommendedName>
        <fullName>Homeobox protein Hox-A2</fullName>
    </recommendedName>
    <alternativeName>
        <fullName>Homeobox protein Hox-1K</fullName>
    </alternativeName>
</protein>
<reference key="1">
    <citation type="journal article" date="2003" name="Nature">
        <title>The DNA sequence of human chromosome 7.</title>
        <authorList>
            <person name="Hillier L.W."/>
            <person name="Fulton R.S."/>
            <person name="Fulton L.A."/>
            <person name="Graves T.A."/>
            <person name="Pepin K.H."/>
            <person name="Wagner-McPherson C."/>
            <person name="Layman D."/>
            <person name="Maas J."/>
            <person name="Jaeger S."/>
            <person name="Walker R."/>
            <person name="Wylie K."/>
            <person name="Sekhon M."/>
            <person name="Becker M.C."/>
            <person name="O'Laughlin M.D."/>
            <person name="Schaller M.E."/>
            <person name="Fewell G.A."/>
            <person name="Delehaunty K.D."/>
            <person name="Miner T.L."/>
            <person name="Nash W.E."/>
            <person name="Cordes M."/>
            <person name="Du H."/>
            <person name="Sun H."/>
            <person name="Edwards J."/>
            <person name="Bradshaw-Cordum H."/>
            <person name="Ali J."/>
            <person name="Andrews S."/>
            <person name="Isak A."/>
            <person name="Vanbrunt A."/>
            <person name="Nguyen C."/>
            <person name="Du F."/>
            <person name="Lamar B."/>
            <person name="Courtney L."/>
            <person name="Kalicki J."/>
            <person name="Ozersky P."/>
            <person name="Bielicki L."/>
            <person name="Scott K."/>
            <person name="Holmes A."/>
            <person name="Harkins R."/>
            <person name="Harris A."/>
            <person name="Strong C.M."/>
            <person name="Hou S."/>
            <person name="Tomlinson C."/>
            <person name="Dauphin-Kohlberg S."/>
            <person name="Kozlowicz-Reilly A."/>
            <person name="Leonard S."/>
            <person name="Rohlfing T."/>
            <person name="Rock S.M."/>
            <person name="Tin-Wollam A.-M."/>
            <person name="Abbott A."/>
            <person name="Minx P."/>
            <person name="Maupin R."/>
            <person name="Strowmatt C."/>
            <person name="Latreille P."/>
            <person name="Miller N."/>
            <person name="Johnson D."/>
            <person name="Murray J."/>
            <person name="Woessner J.P."/>
            <person name="Wendl M.C."/>
            <person name="Yang S.-P."/>
            <person name="Schultz B.R."/>
            <person name="Wallis J.W."/>
            <person name="Spieth J."/>
            <person name="Bieri T.A."/>
            <person name="Nelson J.O."/>
            <person name="Berkowicz N."/>
            <person name="Wohldmann P.E."/>
            <person name="Cook L.L."/>
            <person name="Hickenbotham M.T."/>
            <person name="Eldred J."/>
            <person name="Williams D."/>
            <person name="Bedell J.A."/>
            <person name="Mardis E.R."/>
            <person name="Clifton S.W."/>
            <person name="Chissoe S.L."/>
            <person name="Marra M.A."/>
            <person name="Raymond C."/>
            <person name="Haugen E."/>
            <person name="Gillett W."/>
            <person name="Zhou Y."/>
            <person name="James R."/>
            <person name="Phelps K."/>
            <person name="Iadanoto S."/>
            <person name="Bubb K."/>
            <person name="Simms E."/>
            <person name="Levy R."/>
            <person name="Clendenning J."/>
            <person name="Kaul R."/>
            <person name="Kent W.J."/>
            <person name="Furey T.S."/>
            <person name="Baertsch R.A."/>
            <person name="Brent M.R."/>
            <person name="Keibler E."/>
            <person name="Flicek P."/>
            <person name="Bork P."/>
            <person name="Suyama M."/>
            <person name="Bailey J.A."/>
            <person name="Portnoy M.E."/>
            <person name="Torrents D."/>
            <person name="Chinwalla A.T."/>
            <person name="Gish W.R."/>
            <person name="Eddy S.R."/>
            <person name="McPherson J.D."/>
            <person name="Olson M.V."/>
            <person name="Eichler E.E."/>
            <person name="Green E.D."/>
            <person name="Waterston R.H."/>
            <person name="Wilson R.K."/>
        </authorList>
    </citation>
    <scope>NUCLEOTIDE SEQUENCE [LARGE SCALE GENOMIC DNA]</scope>
</reference>
<reference key="2">
    <citation type="journal article" date="2003" name="Science">
        <title>Human chromosome 7: DNA sequence and biology.</title>
        <authorList>
            <person name="Scherer S.W."/>
            <person name="Cheung J."/>
            <person name="MacDonald J.R."/>
            <person name="Osborne L.R."/>
            <person name="Nakabayashi K."/>
            <person name="Herbrick J.-A."/>
            <person name="Carson A.R."/>
            <person name="Parker-Katiraee L."/>
            <person name="Skaug J."/>
            <person name="Khaja R."/>
            <person name="Zhang J."/>
            <person name="Hudek A.K."/>
            <person name="Li M."/>
            <person name="Haddad M."/>
            <person name="Duggan G.E."/>
            <person name="Fernandez B.A."/>
            <person name="Kanematsu E."/>
            <person name="Gentles S."/>
            <person name="Christopoulos C.C."/>
            <person name="Choufani S."/>
            <person name="Kwasnicka D."/>
            <person name="Zheng X.H."/>
            <person name="Lai Z."/>
            <person name="Nusskern D.R."/>
            <person name="Zhang Q."/>
            <person name="Gu Z."/>
            <person name="Lu F."/>
            <person name="Zeesman S."/>
            <person name="Nowaczyk M.J."/>
            <person name="Teshima I."/>
            <person name="Chitayat D."/>
            <person name="Shuman C."/>
            <person name="Weksberg R."/>
            <person name="Zackai E.H."/>
            <person name="Grebe T.A."/>
            <person name="Cox S.R."/>
            <person name="Kirkpatrick S.J."/>
            <person name="Rahman N."/>
            <person name="Friedman J.M."/>
            <person name="Heng H.H.Q."/>
            <person name="Pelicci P.G."/>
            <person name="Lo-Coco F."/>
            <person name="Belloni E."/>
            <person name="Shaffer L.G."/>
            <person name="Pober B."/>
            <person name="Morton C.C."/>
            <person name="Gusella J.F."/>
            <person name="Bruns G.A.P."/>
            <person name="Korf B.R."/>
            <person name="Quade B.J."/>
            <person name="Ligon A.H."/>
            <person name="Ferguson H."/>
            <person name="Higgins A.W."/>
            <person name="Leach N.T."/>
            <person name="Herrick S.R."/>
            <person name="Lemyre E."/>
            <person name="Farra C.G."/>
            <person name="Kim H.-G."/>
            <person name="Summers A.M."/>
            <person name="Gripp K.W."/>
            <person name="Roberts W."/>
            <person name="Szatmari P."/>
            <person name="Winsor E.J.T."/>
            <person name="Grzeschik K.-H."/>
            <person name="Teebi A."/>
            <person name="Minassian B.A."/>
            <person name="Kere J."/>
            <person name="Armengol L."/>
            <person name="Pujana M.A."/>
            <person name="Estivill X."/>
            <person name="Wilson M.D."/>
            <person name="Koop B.F."/>
            <person name="Tosi S."/>
            <person name="Moore G.E."/>
            <person name="Boright A.P."/>
            <person name="Zlotorynski E."/>
            <person name="Kerem B."/>
            <person name="Kroisel P.M."/>
            <person name="Petek E."/>
            <person name="Oscier D.G."/>
            <person name="Mould S.J."/>
            <person name="Doehner H."/>
            <person name="Doehner K."/>
            <person name="Rommens J.M."/>
            <person name="Vincent J.B."/>
            <person name="Venter J.C."/>
            <person name="Li P.W."/>
            <person name="Mural R.J."/>
            <person name="Adams M.D."/>
            <person name="Tsui L.-C."/>
        </authorList>
    </citation>
    <scope>NUCLEOTIDE SEQUENCE [LARGE SCALE GENOMIC DNA]</scope>
</reference>
<reference key="3">
    <citation type="submission" date="2005-07" db="EMBL/GenBank/DDBJ databases">
        <authorList>
            <person name="Mural R.J."/>
            <person name="Istrail S."/>
            <person name="Sutton G.G."/>
            <person name="Florea L."/>
            <person name="Halpern A.L."/>
            <person name="Mobarry C.M."/>
            <person name="Lippert R."/>
            <person name="Walenz B."/>
            <person name="Shatkay H."/>
            <person name="Dew I."/>
            <person name="Miller J.R."/>
            <person name="Flanigan M.J."/>
            <person name="Edwards N.J."/>
            <person name="Bolanos R."/>
            <person name="Fasulo D."/>
            <person name="Halldorsson B.V."/>
            <person name="Hannenhalli S."/>
            <person name="Turner R."/>
            <person name="Yooseph S."/>
            <person name="Lu F."/>
            <person name="Nusskern D.R."/>
            <person name="Shue B.C."/>
            <person name="Zheng X.H."/>
            <person name="Zhong F."/>
            <person name="Delcher A.L."/>
            <person name="Huson D.H."/>
            <person name="Kravitz S.A."/>
            <person name="Mouchard L."/>
            <person name="Reinert K."/>
            <person name="Remington K.A."/>
            <person name="Clark A.G."/>
            <person name="Waterman M.S."/>
            <person name="Eichler E.E."/>
            <person name="Adams M.D."/>
            <person name="Hunkapiller M.W."/>
            <person name="Myers E.W."/>
            <person name="Venter J.C."/>
        </authorList>
    </citation>
    <scope>NUCLEOTIDE SEQUENCE [LARGE SCALE GENOMIC DNA]</scope>
</reference>
<reference key="4">
    <citation type="journal article" date="2004" name="Genome Res.">
        <title>The status, quality, and expansion of the NIH full-length cDNA project: the Mammalian Gene Collection (MGC).</title>
        <authorList>
            <consortium name="The MGC Project Team"/>
        </authorList>
    </citation>
    <scope>NUCLEOTIDE SEQUENCE [LARGE SCALE MRNA]</scope>
</reference>
<reference key="5">
    <citation type="journal article" date="2013" name="Hum. Mutat.">
        <title>HOXA2 haploinsufficiency in dominant bilateral microtia and hearing loss.</title>
        <authorList>
            <person name="Brown K.K."/>
            <person name="Viana L.M."/>
            <person name="Helwig C.C."/>
            <person name="Artunduaga M.A."/>
            <person name="Quintanilla-Dieck L."/>
            <person name="Jarrin P."/>
            <person name="Osorno G."/>
            <person name="McDonough B."/>
            <person name="Depalma S.R."/>
            <person name="Eavey R.D."/>
            <person name="Seidman J.G."/>
            <person name="Seidman C.E."/>
        </authorList>
    </citation>
    <scope>INVOLVEMENT IN MCRT</scope>
</reference>
<reference key="6">
    <citation type="journal article" date="2008" name="Am. J. Hum. Genet.">
        <title>A mutation in HOXA2 is responsible for autosomal-recessive microtia in an Iranian family.</title>
        <authorList>
            <person name="Alasti F."/>
            <person name="Sadeghi A."/>
            <person name="Sanati M.H."/>
            <person name="Farhadi M."/>
            <person name="Stollar E."/>
            <person name="Somers T."/>
            <person name="Van Camp G."/>
        </authorList>
    </citation>
    <scope>VARIANT MHICP LYS-186</scope>
</reference>
<reference key="7">
    <citation type="journal article" date="2008" name="Am. J. Hum. Genet.">
        <authorList>
            <person name="Alasti F."/>
            <person name="Sadeghi A."/>
            <person name="Sanati M.H."/>
            <person name="Farhadi M."/>
            <person name="Stollar E."/>
            <person name="Somers T."/>
            <person name="Van Camp G."/>
        </authorList>
    </citation>
    <scope>ERRATUM OF PUBMED:18394579</scope>
</reference>
<dbReference type="EMBL" id="AC004079">
    <property type="protein sequence ID" value="AAS00375.1"/>
    <property type="molecule type" value="Genomic_DNA"/>
</dbReference>
<dbReference type="EMBL" id="CH236948">
    <property type="protein sequence ID" value="EAL24227.1"/>
    <property type="molecule type" value="Genomic_DNA"/>
</dbReference>
<dbReference type="EMBL" id="CH471073">
    <property type="protein sequence ID" value="EAW93864.1"/>
    <property type="molecule type" value="Genomic_DNA"/>
</dbReference>
<dbReference type="EMBL" id="BC130571">
    <property type="protein sequence ID" value="AAI30572.1"/>
    <property type="molecule type" value="mRNA"/>
</dbReference>
<dbReference type="EMBL" id="BC136500">
    <property type="protein sequence ID" value="AAI36501.1"/>
    <property type="molecule type" value="mRNA"/>
</dbReference>
<dbReference type="CCDS" id="CCDS5403.1"/>
<dbReference type="RefSeq" id="NP_006726.1">
    <property type="nucleotide sequence ID" value="NM_006735.4"/>
</dbReference>
<dbReference type="SMR" id="O43364"/>
<dbReference type="BioGRID" id="109439">
    <property type="interactions" value="16"/>
</dbReference>
<dbReference type="FunCoup" id="O43364">
    <property type="interactions" value="1111"/>
</dbReference>
<dbReference type="IntAct" id="O43364">
    <property type="interactions" value="13"/>
</dbReference>
<dbReference type="STRING" id="9606.ENSP00000222718"/>
<dbReference type="iPTMnet" id="O43364"/>
<dbReference type="PhosphoSitePlus" id="O43364"/>
<dbReference type="BioMuta" id="HOXA2"/>
<dbReference type="MassIVE" id="O43364"/>
<dbReference type="PaxDb" id="9606-ENSP00000222718"/>
<dbReference type="PeptideAtlas" id="O43364"/>
<dbReference type="Antibodypedia" id="12364">
    <property type="antibodies" value="162 antibodies from 27 providers"/>
</dbReference>
<dbReference type="DNASU" id="3199"/>
<dbReference type="Ensembl" id="ENST00000222718.7">
    <property type="protein sequence ID" value="ENSP00000222718.5"/>
    <property type="gene ID" value="ENSG00000105996.7"/>
</dbReference>
<dbReference type="GeneID" id="3199"/>
<dbReference type="KEGG" id="hsa:3199"/>
<dbReference type="MANE-Select" id="ENST00000222718.7">
    <property type="protein sequence ID" value="ENSP00000222718.5"/>
    <property type="RefSeq nucleotide sequence ID" value="NM_006735.4"/>
    <property type="RefSeq protein sequence ID" value="NP_006726.1"/>
</dbReference>
<dbReference type="UCSC" id="uc003syh.4">
    <property type="organism name" value="human"/>
</dbReference>
<dbReference type="AGR" id="HGNC:5103"/>
<dbReference type="CTD" id="3199"/>
<dbReference type="DisGeNET" id="3199"/>
<dbReference type="GeneCards" id="HOXA2"/>
<dbReference type="HGNC" id="HGNC:5103">
    <property type="gene designation" value="HOXA2"/>
</dbReference>
<dbReference type="HPA" id="ENSG00000105996">
    <property type="expression patterns" value="Low tissue specificity"/>
</dbReference>
<dbReference type="MalaCards" id="HOXA2"/>
<dbReference type="MIM" id="604685">
    <property type="type" value="gene"/>
</dbReference>
<dbReference type="MIM" id="612290">
    <property type="type" value="phenotype"/>
</dbReference>
<dbReference type="neXtProt" id="NX_O43364"/>
<dbReference type="OpenTargets" id="ENSG00000105996"/>
<dbReference type="Orphanet" id="140963">
    <property type="disease" value="Bilateral microtia-deafness-cleft palate syndrome"/>
</dbReference>
<dbReference type="Orphanet" id="83463">
    <property type="disease" value="Microtia"/>
</dbReference>
<dbReference type="PharmGKB" id="PA29380"/>
<dbReference type="VEuPathDB" id="HostDB:ENSG00000105996"/>
<dbReference type="eggNOG" id="KOG0489">
    <property type="taxonomic scope" value="Eukaryota"/>
</dbReference>
<dbReference type="GeneTree" id="ENSGT00940000162533"/>
<dbReference type="HOGENOM" id="CLU_048378_0_0_1"/>
<dbReference type="InParanoid" id="O43364"/>
<dbReference type="OMA" id="IHDFQPF"/>
<dbReference type="OrthoDB" id="6159439at2759"/>
<dbReference type="PAN-GO" id="O43364">
    <property type="GO annotations" value="4 GO annotations based on evolutionary models"/>
</dbReference>
<dbReference type="PhylomeDB" id="O43364"/>
<dbReference type="TreeFam" id="TF317730"/>
<dbReference type="PathwayCommons" id="O43364"/>
<dbReference type="Reactome" id="R-HSA-5617472">
    <property type="pathway name" value="Activation of anterior HOX genes in hindbrain development during early embryogenesis"/>
</dbReference>
<dbReference type="Reactome" id="R-HSA-9010553">
    <property type="pathway name" value="Regulation of expression of SLITs and ROBOs"/>
</dbReference>
<dbReference type="SignaLink" id="O43364"/>
<dbReference type="SIGNOR" id="O43364"/>
<dbReference type="BioGRID-ORCS" id="3199">
    <property type="hits" value="6 hits in 1169 CRISPR screens"/>
</dbReference>
<dbReference type="GeneWiki" id="HOXA2"/>
<dbReference type="GenomeRNAi" id="3199"/>
<dbReference type="Pharos" id="O43364">
    <property type="development level" value="Tbio"/>
</dbReference>
<dbReference type="PRO" id="PR:O43364"/>
<dbReference type="Proteomes" id="UP000005640">
    <property type="component" value="Chromosome 7"/>
</dbReference>
<dbReference type="RNAct" id="O43364">
    <property type="molecule type" value="protein"/>
</dbReference>
<dbReference type="Bgee" id="ENSG00000105996">
    <property type="expression patterns" value="Expressed in mucosa of transverse colon and 81 other cell types or tissues"/>
</dbReference>
<dbReference type="GO" id="GO:0000785">
    <property type="term" value="C:chromatin"/>
    <property type="evidence" value="ECO:0000247"/>
    <property type="project" value="NTNU_SB"/>
</dbReference>
<dbReference type="GO" id="GO:0043231">
    <property type="term" value="C:intracellular membrane-bounded organelle"/>
    <property type="evidence" value="ECO:0000314"/>
    <property type="project" value="HPA"/>
</dbReference>
<dbReference type="GO" id="GO:0005654">
    <property type="term" value="C:nucleoplasm"/>
    <property type="evidence" value="ECO:0000314"/>
    <property type="project" value="HPA"/>
</dbReference>
<dbReference type="GO" id="GO:0005634">
    <property type="term" value="C:nucleus"/>
    <property type="evidence" value="ECO:0000318"/>
    <property type="project" value="GO_Central"/>
</dbReference>
<dbReference type="GO" id="GO:0000981">
    <property type="term" value="F:DNA-binding transcription factor activity, RNA polymerase II-specific"/>
    <property type="evidence" value="ECO:0000247"/>
    <property type="project" value="NTNU_SB"/>
</dbReference>
<dbReference type="GO" id="GO:0001227">
    <property type="term" value="F:DNA-binding transcription repressor activity, RNA polymerase II-specific"/>
    <property type="evidence" value="ECO:0007669"/>
    <property type="project" value="Ensembl"/>
</dbReference>
<dbReference type="GO" id="GO:0000978">
    <property type="term" value="F:RNA polymerase II cis-regulatory region sequence-specific DNA binding"/>
    <property type="evidence" value="ECO:0000318"/>
    <property type="project" value="GO_Central"/>
</dbReference>
<dbReference type="GO" id="GO:1990837">
    <property type="term" value="F:sequence-specific double-stranded DNA binding"/>
    <property type="evidence" value="ECO:0000314"/>
    <property type="project" value="ARUK-UCL"/>
</dbReference>
<dbReference type="GO" id="GO:0009952">
    <property type="term" value="P:anterior/posterior pattern specification"/>
    <property type="evidence" value="ECO:0007669"/>
    <property type="project" value="Ensembl"/>
</dbReference>
<dbReference type="GO" id="GO:0035284">
    <property type="term" value="P:brain segmentation"/>
    <property type="evidence" value="ECO:0007669"/>
    <property type="project" value="Ensembl"/>
</dbReference>
<dbReference type="GO" id="GO:0001709">
    <property type="term" value="P:cell fate determination"/>
    <property type="evidence" value="ECO:0007669"/>
    <property type="project" value="Ensembl"/>
</dbReference>
<dbReference type="GO" id="GO:0071300">
    <property type="term" value="P:cellular response to retinoic acid"/>
    <property type="evidence" value="ECO:0007669"/>
    <property type="project" value="Ensembl"/>
</dbReference>
<dbReference type="GO" id="GO:0009953">
    <property type="term" value="P:dorsal/ventral pattern formation"/>
    <property type="evidence" value="ECO:0007669"/>
    <property type="project" value="Ensembl"/>
</dbReference>
<dbReference type="GO" id="GO:0048703">
    <property type="term" value="P:embryonic viscerocranium morphogenesis"/>
    <property type="evidence" value="ECO:0007669"/>
    <property type="project" value="Ensembl"/>
</dbReference>
<dbReference type="GO" id="GO:0042474">
    <property type="term" value="P:middle ear morphogenesis"/>
    <property type="evidence" value="ECO:0007669"/>
    <property type="project" value="Ensembl"/>
</dbReference>
<dbReference type="GO" id="GO:0008045">
    <property type="term" value="P:motor neuron axon guidance"/>
    <property type="evidence" value="ECO:0007669"/>
    <property type="project" value="Ensembl"/>
</dbReference>
<dbReference type="GO" id="GO:0061061">
    <property type="term" value="P:muscle structure development"/>
    <property type="evidence" value="ECO:0007669"/>
    <property type="project" value="Ensembl"/>
</dbReference>
<dbReference type="GO" id="GO:0045665">
    <property type="term" value="P:negative regulation of neuron differentiation"/>
    <property type="evidence" value="ECO:0007669"/>
    <property type="project" value="Ensembl"/>
</dbReference>
<dbReference type="GO" id="GO:0045668">
    <property type="term" value="P:negative regulation of osteoblast differentiation"/>
    <property type="evidence" value="ECO:0007669"/>
    <property type="project" value="Ensembl"/>
</dbReference>
<dbReference type="GO" id="GO:0002076">
    <property type="term" value="P:osteoblast development"/>
    <property type="evidence" value="ECO:0007669"/>
    <property type="project" value="Ensembl"/>
</dbReference>
<dbReference type="GO" id="GO:0060037">
    <property type="term" value="P:pharyngeal system development"/>
    <property type="evidence" value="ECO:0007669"/>
    <property type="project" value="Ensembl"/>
</dbReference>
<dbReference type="GO" id="GO:0045944">
    <property type="term" value="P:positive regulation of transcription by RNA polymerase II"/>
    <property type="evidence" value="ECO:0007669"/>
    <property type="project" value="Ensembl"/>
</dbReference>
<dbReference type="GO" id="GO:0006357">
    <property type="term" value="P:regulation of transcription by RNA polymerase II"/>
    <property type="evidence" value="ECO:0000318"/>
    <property type="project" value="GO_Central"/>
</dbReference>
<dbReference type="GO" id="GO:0021568">
    <property type="term" value="P:rhombomere 2 development"/>
    <property type="evidence" value="ECO:0007669"/>
    <property type="project" value="Ensembl"/>
</dbReference>
<dbReference type="GO" id="GO:0021658">
    <property type="term" value="P:rhombomere 3 morphogenesis"/>
    <property type="evidence" value="ECO:0007669"/>
    <property type="project" value="Ensembl"/>
</dbReference>
<dbReference type="GO" id="GO:0007379">
    <property type="term" value="P:segment specification"/>
    <property type="evidence" value="ECO:0007669"/>
    <property type="project" value="Ensembl"/>
</dbReference>
<dbReference type="CDD" id="cd00086">
    <property type="entry name" value="homeodomain"/>
    <property type="match status" value="1"/>
</dbReference>
<dbReference type="FunFam" id="1.10.10.60:FF:000145">
    <property type="entry name" value="homeobox protein Hox-A2"/>
    <property type="match status" value="1"/>
</dbReference>
<dbReference type="Gene3D" id="1.10.10.60">
    <property type="entry name" value="Homeodomain-like"/>
    <property type="match status" value="1"/>
</dbReference>
<dbReference type="InterPro" id="IPR001356">
    <property type="entry name" value="HD"/>
</dbReference>
<dbReference type="InterPro" id="IPR020479">
    <property type="entry name" value="HD_metazoa"/>
</dbReference>
<dbReference type="InterPro" id="IPR001827">
    <property type="entry name" value="Homeobox_Antennapedia_CS"/>
</dbReference>
<dbReference type="InterPro" id="IPR017970">
    <property type="entry name" value="Homeobox_CS"/>
</dbReference>
<dbReference type="InterPro" id="IPR009057">
    <property type="entry name" value="Homeodomain-like_sf"/>
</dbReference>
<dbReference type="PANTHER" id="PTHR45664:SF3">
    <property type="entry name" value="HOMEOBOX PROTEIN HOX-A2"/>
    <property type="match status" value="1"/>
</dbReference>
<dbReference type="PANTHER" id="PTHR45664">
    <property type="entry name" value="PROTEIN ZERKNUELLT 1-RELATED"/>
    <property type="match status" value="1"/>
</dbReference>
<dbReference type="Pfam" id="PF00046">
    <property type="entry name" value="Homeodomain"/>
    <property type="match status" value="1"/>
</dbReference>
<dbReference type="PRINTS" id="PR00024">
    <property type="entry name" value="HOMEOBOX"/>
</dbReference>
<dbReference type="SMART" id="SM00389">
    <property type="entry name" value="HOX"/>
    <property type="match status" value="1"/>
</dbReference>
<dbReference type="SUPFAM" id="SSF46689">
    <property type="entry name" value="Homeodomain-like"/>
    <property type="match status" value="1"/>
</dbReference>
<dbReference type="PROSITE" id="PS00032">
    <property type="entry name" value="ANTENNAPEDIA"/>
    <property type="match status" value="1"/>
</dbReference>
<dbReference type="PROSITE" id="PS00027">
    <property type="entry name" value="HOMEOBOX_1"/>
    <property type="match status" value="1"/>
</dbReference>
<dbReference type="PROSITE" id="PS50071">
    <property type="entry name" value="HOMEOBOX_2"/>
    <property type="match status" value="1"/>
</dbReference>
<accession>O43364</accession>
<accession>A1L4K3</accession>
<accession>B2RMW3</accession>